<organism>
    <name type="scientific">Staphylococcus epidermidis (strain ATCC 12228 / FDA PCI 1200)</name>
    <dbReference type="NCBI Taxonomy" id="176280"/>
    <lineage>
        <taxon>Bacteria</taxon>
        <taxon>Bacillati</taxon>
        <taxon>Bacillota</taxon>
        <taxon>Bacilli</taxon>
        <taxon>Bacillales</taxon>
        <taxon>Staphylococcaceae</taxon>
        <taxon>Staphylococcus</taxon>
    </lineage>
</organism>
<feature type="chain" id="PRO_0000110475" description="Beta-ketoacyl-[acyl-carrier-protein] synthase III 2">
    <location>
        <begin position="1"/>
        <end position="326"/>
    </location>
</feature>
<feature type="region of interest" description="ACP-binding" evidence="1">
    <location>
        <begin position="252"/>
        <end position="256"/>
    </location>
</feature>
<feature type="active site" evidence="1">
    <location>
        <position position="114"/>
    </location>
</feature>
<feature type="active site" evidence="1">
    <location>
        <position position="251"/>
    </location>
</feature>
<feature type="active site" evidence="1">
    <location>
        <position position="281"/>
    </location>
</feature>
<protein>
    <recommendedName>
        <fullName evidence="1">Beta-ketoacyl-[acyl-carrier-protein] synthase III 2</fullName>
        <shortName evidence="1">Beta-ketoacyl-ACP synthase III 2</shortName>
        <shortName evidence="1">KAS III 2</shortName>
        <ecNumber evidence="1">2.3.1.180</ecNumber>
    </recommendedName>
    <alternativeName>
        <fullName evidence="1">3-oxoacyl-[acyl-carrier-protein] synthase 3 2</fullName>
    </alternativeName>
    <alternativeName>
        <fullName evidence="1">3-oxoacyl-[acyl-carrier-protein] synthase III 2</fullName>
    </alternativeName>
</protein>
<dbReference type="EC" id="2.3.1.180" evidence="1"/>
<dbReference type="EMBL" id="AE015934">
    <property type="protein sequence ID" value="AAO06192.1"/>
    <property type="molecule type" value="Genomic_DNA"/>
</dbReference>
<dbReference type="RefSeq" id="NP_863215.1">
    <property type="nucleotide sequence ID" value="NC_005004.1"/>
</dbReference>
<dbReference type="RefSeq" id="WP_011117506.1">
    <property type="nucleotide sequence ID" value="NZ_WBME01000048.1"/>
</dbReference>
<dbReference type="SMR" id="Q8CUB8"/>
<dbReference type="KEGG" id="sep:SE_p512"/>
<dbReference type="PATRIC" id="fig|176280.10.peg.2383"/>
<dbReference type="HOGENOM" id="CLU_039592_3_1_9"/>
<dbReference type="OrthoDB" id="9815506at2"/>
<dbReference type="UniPathway" id="UPA00094"/>
<dbReference type="Proteomes" id="UP000001411">
    <property type="component" value="Plasmid pSE-12228-05"/>
</dbReference>
<dbReference type="GO" id="GO:0005737">
    <property type="term" value="C:cytoplasm"/>
    <property type="evidence" value="ECO:0007669"/>
    <property type="project" value="UniProtKB-SubCell"/>
</dbReference>
<dbReference type="GO" id="GO:0004315">
    <property type="term" value="F:3-oxoacyl-[acyl-carrier-protein] synthase activity"/>
    <property type="evidence" value="ECO:0007669"/>
    <property type="project" value="InterPro"/>
</dbReference>
<dbReference type="GO" id="GO:0033818">
    <property type="term" value="F:beta-ketoacyl-acyl-carrier-protein synthase III activity"/>
    <property type="evidence" value="ECO:0007669"/>
    <property type="project" value="UniProtKB-UniRule"/>
</dbReference>
<dbReference type="GO" id="GO:0006633">
    <property type="term" value="P:fatty acid biosynthetic process"/>
    <property type="evidence" value="ECO:0007669"/>
    <property type="project" value="UniProtKB-UniRule"/>
</dbReference>
<dbReference type="GO" id="GO:0044550">
    <property type="term" value="P:secondary metabolite biosynthetic process"/>
    <property type="evidence" value="ECO:0007669"/>
    <property type="project" value="TreeGrafter"/>
</dbReference>
<dbReference type="CDD" id="cd00830">
    <property type="entry name" value="KAS_III"/>
    <property type="match status" value="1"/>
</dbReference>
<dbReference type="FunFam" id="3.40.47.10:FF:000004">
    <property type="entry name" value="3-oxoacyl-[acyl-carrier-protein] synthase 3"/>
    <property type="match status" value="1"/>
</dbReference>
<dbReference type="Gene3D" id="3.40.47.10">
    <property type="match status" value="1"/>
</dbReference>
<dbReference type="HAMAP" id="MF_01815">
    <property type="entry name" value="FabH"/>
    <property type="match status" value="1"/>
</dbReference>
<dbReference type="InterPro" id="IPR013747">
    <property type="entry name" value="ACP_syn_III_C"/>
</dbReference>
<dbReference type="InterPro" id="IPR013751">
    <property type="entry name" value="ACP_syn_III_N"/>
</dbReference>
<dbReference type="InterPro" id="IPR004655">
    <property type="entry name" value="FabH"/>
</dbReference>
<dbReference type="InterPro" id="IPR016039">
    <property type="entry name" value="Thiolase-like"/>
</dbReference>
<dbReference type="NCBIfam" id="TIGR00747">
    <property type="entry name" value="fabH"/>
    <property type="match status" value="1"/>
</dbReference>
<dbReference type="NCBIfam" id="NF006829">
    <property type="entry name" value="PRK09352.1"/>
    <property type="match status" value="1"/>
</dbReference>
<dbReference type="PANTHER" id="PTHR34069">
    <property type="entry name" value="3-OXOACYL-[ACYL-CARRIER-PROTEIN] SYNTHASE 3"/>
    <property type="match status" value="1"/>
</dbReference>
<dbReference type="PANTHER" id="PTHR34069:SF2">
    <property type="entry name" value="BETA-KETOACYL-[ACYL-CARRIER-PROTEIN] SYNTHASE III"/>
    <property type="match status" value="1"/>
</dbReference>
<dbReference type="Pfam" id="PF08545">
    <property type="entry name" value="ACP_syn_III"/>
    <property type="match status" value="1"/>
</dbReference>
<dbReference type="Pfam" id="PF08541">
    <property type="entry name" value="ACP_syn_III_C"/>
    <property type="match status" value="1"/>
</dbReference>
<dbReference type="SUPFAM" id="SSF53901">
    <property type="entry name" value="Thiolase-like"/>
    <property type="match status" value="1"/>
</dbReference>
<geneLocation type="plasmid">
    <name>pSE-12228-05</name>
</geneLocation>
<reference key="1">
    <citation type="journal article" date="2003" name="Mol. Microbiol.">
        <title>Genome-based analysis of virulence genes in a non-biofilm-forming Staphylococcus epidermidis strain (ATCC 12228).</title>
        <authorList>
            <person name="Zhang Y.-Q."/>
            <person name="Ren S.-X."/>
            <person name="Li H.-L."/>
            <person name="Wang Y.-X."/>
            <person name="Fu G."/>
            <person name="Yang J."/>
            <person name="Qin Z.-Q."/>
            <person name="Miao Y.-G."/>
            <person name="Wang W.-Y."/>
            <person name="Chen R.-S."/>
            <person name="Shen Y."/>
            <person name="Chen Z."/>
            <person name="Yuan Z.-H."/>
            <person name="Zhao G.-P."/>
            <person name="Qu D."/>
            <person name="Danchin A."/>
            <person name="Wen Y.-M."/>
        </authorList>
    </citation>
    <scope>NUCLEOTIDE SEQUENCE [LARGE SCALE GENOMIC DNA]</scope>
    <source>
        <strain>ATCC 12228 / FDA PCI 1200</strain>
    </source>
</reference>
<accession>Q8CUB8</accession>
<sequence length="326" mass="36000">MQSFAKITAQGTYVPEKVMDNNDFEKIVETSDEWIQQRTGIIERRIADENEYTSDLSYKAVLDLQEKYQVDLTDVDMIINTTLTPDYKTPSVASYVQAQLGLKNAGAIDINAACAGFTYGLNLANGLITSGQNKKILVIGSETLSKITDYNDRSTCILFGDGAGAFLVEYDKEEMSFIASNAGSDGLKGHNLYCTELSEEMFSDDLENHGYIVQNGRGVYKWAVGNVPNIIHEVLNQSNYSIEDLNWFVPHSANARMIESICEKANIETDKALKSLKYYGNTSSATIPLSIDLAIKEGKIKKDDLILLVGFGGGLAYASTLIRWTI</sequence>
<proteinExistence type="inferred from homology"/>
<gene>
    <name evidence="1" type="primary">fabH2</name>
    <name type="ordered locus">SE_p512</name>
</gene>
<evidence type="ECO:0000255" key="1">
    <source>
        <dbReference type="HAMAP-Rule" id="MF_01815"/>
    </source>
</evidence>
<keyword id="KW-0012">Acyltransferase</keyword>
<keyword id="KW-0963">Cytoplasm</keyword>
<keyword id="KW-0275">Fatty acid biosynthesis</keyword>
<keyword id="KW-0276">Fatty acid metabolism</keyword>
<keyword id="KW-0444">Lipid biosynthesis</keyword>
<keyword id="KW-0443">Lipid metabolism</keyword>
<keyword id="KW-0511">Multifunctional enzyme</keyword>
<keyword id="KW-0614">Plasmid</keyword>
<keyword id="KW-0808">Transferase</keyword>
<name>FABH2_STAES</name>
<comment type="function">
    <text evidence="1">Catalyzes the condensation reaction of fatty acid synthesis by the addition to an acyl acceptor of two carbons from malonyl-ACP. Catalyzes the first condensation reaction which initiates fatty acid synthesis and may therefore play a role in governing the total rate of fatty acid production. Possesses both acetoacetyl-ACP synthase and acetyl transacylase activities. Its substrate specificity determines the biosynthesis of branched-chain and/or straight-chain of fatty acids.</text>
</comment>
<comment type="catalytic activity">
    <reaction evidence="1">
        <text>malonyl-[ACP] + acetyl-CoA + H(+) = 3-oxobutanoyl-[ACP] + CO2 + CoA</text>
        <dbReference type="Rhea" id="RHEA:12080"/>
        <dbReference type="Rhea" id="RHEA-COMP:9623"/>
        <dbReference type="Rhea" id="RHEA-COMP:9625"/>
        <dbReference type="ChEBI" id="CHEBI:15378"/>
        <dbReference type="ChEBI" id="CHEBI:16526"/>
        <dbReference type="ChEBI" id="CHEBI:57287"/>
        <dbReference type="ChEBI" id="CHEBI:57288"/>
        <dbReference type="ChEBI" id="CHEBI:78449"/>
        <dbReference type="ChEBI" id="CHEBI:78450"/>
        <dbReference type="EC" id="2.3.1.180"/>
    </reaction>
</comment>
<comment type="pathway">
    <text evidence="1">Lipid metabolism; fatty acid biosynthesis.</text>
</comment>
<comment type="subunit">
    <text evidence="1">Homodimer.</text>
</comment>
<comment type="subcellular location">
    <subcellularLocation>
        <location evidence="1">Cytoplasm</location>
    </subcellularLocation>
</comment>
<comment type="domain">
    <text evidence="1">The last Arg residue of the ACP-binding site is essential for the weak association between ACP/AcpP and FabH.</text>
</comment>
<comment type="similarity">
    <text evidence="1">Belongs to the thiolase-like superfamily. FabH family.</text>
</comment>